<proteinExistence type="inferred from homology"/>
<dbReference type="EMBL" id="AM408590">
    <property type="protein sequence ID" value="CAL70740.1"/>
    <property type="molecule type" value="Genomic_DNA"/>
</dbReference>
<dbReference type="RefSeq" id="WP_003403582.1">
    <property type="nucleotide sequence ID" value="NC_008769.1"/>
</dbReference>
<dbReference type="SMR" id="A1KGI5"/>
<dbReference type="GeneID" id="45424669"/>
<dbReference type="KEGG" id="mbb:BCG_0754"/>
<dbReference type="HOGENOM" id="CLU_036235_2_1_11"/>
<dbReference type="Proteomes" id="UP000001472">
    <property type="component" value="Chromosome"/>
</dbReference>
<dbReference type="GO" id="GO:0015934">
    <property type="term" value="C:large ribosomal subunit"/>
    <property type="evidence" value="ECO:0007669"/>
    <property type="project" value="InterPro"/>
</dbReference>
<dbReference type="GO" id="GO:0019843">
    <property type="term" value="F:rRNA binding"/>
    <property type="evidence" value="ECO:0007669"/>
    <property type="project" value="UniProtKB-UniRule"/>
</dbReference>
<dbReference type="GO" id="GO:0003735">
    <property type="term" value="F:structural constituent of ribosome"/>
    <property type="evidence" value="ECO:0007669"/>
    <property type="project" value="InterPro"/>
</dbReference>
<dbReference type="GO" id="GO:0016740">
    <property type="term" value="F:transferase activity"/>
    <property type="evidence" value="ECO:0007669"/>
    <property type="project" value="InterPro"/>
</dbReference>
<dbReference type="GO" id="GO:0002181">
    <property type="term" value="P:cytoplasmic translation"/>
    <property type="evidence" value="ECO:0007669"/>
    <property type="project" value="TreeGrafter"/>
</dbReference>
<dbReference type="FunFam" id="2.30.30.30:FF:000001">
    <property type="entry name" value="50S ribosomal protein L2"/>
    <property type="match status" value="1"/>
</dbReference>
<dbReference type="FunFam" id="2.40.50.140:FF:000003">
    <property type="entry name" value="50S ribosomal protein L2"/>
    <property type="match status" value="1"/>
</dbReference>
<dbReference type="FunFam" id="4.10.950.10:FF:000001">
    <property type="entry name" value="50S ribosomal protein L2"/>
    <property type="match status" value="1"/>
</dbReference>
<dbReference type="Gene3D" id="2.30.30.30">
    <property type="match status" value="1"/>
</dbReference>
<dbReference type="Gene3D" id="2.40.50.140">
    <property type="entry name" value="Nucleic acid-binding proteins"/>
    <property type="match status" value="1"/>
</dbReference>
<dbReference type="Gene3D" id="4.10.950.10">
    <property type="entry name" value="Ribosomal protein L2, domain 3"/>
    <property type="match status" value="1"/>
</dbReference>
<dbReference type="HAMAP" id="MF_01320_B">
    <property type="entry name" value="Ribosomal_uL2_B"/>
    <property type="match status" value="1"/>
</dbReference>
<dbReference type="InterPro" id="IPR012340">
    <property type="entry name" value="NA-bd_OB-fold"/>
</dbReference>
<dbReference type="InterPro" id="IPR014722">
    <property type="entry name" value="Rib_uL2_dom2"/>
</dbReference>
<dbReference type="InterPro" id="IPR002171">
    <property type="entry name" value="Ribosomal_uL2"/>
</dbReference>
<dbReference type="InterPro" id="IPR005880">
    <property type="entry name" value="Ribosomal_uL2_bac/org-type"/>
</dbReference>
<dbReference type="InterPro" id="IPR022669">
    <property type="entry name" value="Ribosomal_uL2_C"/>
</dbReference>
<dbReference type="InterPro" id="IPR022671">
    <property type="entry name" value="Ribosomal_uL2_CS"/>
</dbReference>
<dbReference type="InterPro" id="IPR014726">
    <property type="entry name" value="Ribosomal_uL2_dom3"/>
</dbReference>
<dbReference type="InterPro" id="IPR022666">
    <property type="entry name" value="Ribosomal_uL2_RNA-bd_dom"/>
</dbReference>
<dbReference type="InterPro" id="IPR008991">
    <property type="entry name" value="Translation_prot_SH3-like_sf"/>
</dbReference>
<dbReference type="NCBIfam" id="TIGR01171">
    <property type="entry name" value="rplB_bact"/>
    <property type="match status" value="1"/>
</dbReference>
<dbReference type="PANTHER" id="PTHR13691:SF5">
    <property type="entry name" value="LARGE RIBOSOMAL SUBUNIT PROTEIN UL2M"/>
    <property type="match status" value="1"/>
</dbReference>
<dbReference type="PANTHER" id="PTHR13691">
    <property type="entry name" value="RIBOSOMAL PROTEIN L2"/>
    <property type="match status" value="1"/>
</dbReference>
<dbReference type="Pfam" id="PF00181">
    <property type="entry name" value="Ribosomal_L2"/>
    <property type="match status" value="1"/>
</dbReference>
<dbReference type="Pfam" id="PF03947">
    <property type="entry name" value="Ribosomal_L2_C"/>
    <property type="match status" value="1"/>
</dbReference>
<dbReference type="PIRSF" id="PIRSF002158">
    <property type="entry name" value="Ribosomal_L2"/>
    <property type="match status" value="1"/>
</dbReference>
<dbReference type="SMART" id="SM01383">
    <property type="entry name" value="Ribosomal_L2"/>
    <property type="match status" value="1"/>
</dbReference>
<dbReference type="SMART" id="SM01382">
    <property type="entry name" value="Ribosomal_L2_C"/>
    <property type="match status" value="1"/>
</dbReference>
<dbReference type="SUPFAM" id="SSF50249">
    <property type="entry name" value="Nucleic acid-binding proteins"/>
    <property type="match status" value="1"/>
</dbReference>
<dbReference type="SUPFAM" id="SSF50104">
    <property type="entry name" value="Translation proteins SH3-like domain"/>
    <property type="match status" value="1"/>
</dbReference>
<dbReference type="PROSITE" id="PS00467">
    <property type="entry name" value="RIBOSOMAL_L2"/>
    <property type="match status" value="1"/>
</dbReference>
<protein>
    <recommendedName>
        <fullName evidence="1">Large ribosomal subunit protein uL2</fullName>
    </recommendedName>
    <alternativeName>
        <fullName evidence="3">50S ribosomal protein L2</fullName>
    </alternativeName>
</protein>
<sequence length="280" mass="30577">MAIRKYKPTTPGRRGASVSDFAEITRSTPEKSLVRPLHGRGGRNAHGRITTRHKGGGHKRAYRMIDFRRNDKDGVNAKVAHIEYDPNRTARIALLHYLDGEKRYIIAPNGLSQGDVVESGANADIKPGNNLPLRNIPAGTLIHAVELRPGGGAKLARSAGSSIQLLGKEASYASLRMPSGEIRRVDVRCRATVGEVGNAEQANINWGKAGRMRWKGKRPSVRGVVMNPVDHPHGGGEGKTSGGRHPVSPWGKPEGRTRNANKSSNKFIVRRRRTGKKHSR</sequence>
<gene>
    <name evidence="1" type="primary">rplB</name>
    <name type="ordered locus">BCG_0754</name>
</gene>
<comment type="function">
    <text evidence="1">One of the primary rRNA binding proteins. Required for association of the 30S and 50S subunits to form the 70S ribosome, for tRNA binding and peptide bond formation. It has been suggested to have peptidyltransferase activity; this is somewhat controversial. Makes several contacts with the 16S rRNA in the 70S ribosome.</text>
</comment>
<comment type="subunit">
    <text evidence="1">Part of the 50S ribosomal subunit. Forms a bridge to the 30S subunit in the 70S ribosome.</text>
</comment>
<comment type="similarity">
    <text evidence="1">Belongs to the universal ribosomal protein uL2 family.</text>
</comment>
<accession>A1KGI5</accession>
<reference key="1">
    <citation type="journal article" date="2007" name="Proc. Natl. Acad. Sci. U.S.A.">
        <title>Genome plasticity of BCG and impact on vaccine efficacy.</title>
        <authorList>
            <person name="Brosch R."/>
            <person name="Gordon S.V."/>
            <person name="Garnier T."/>
            <person name="Eiglmeier K."/>
            <person name="Frigui W."/>
            <person name="Valenti P."/>
            <person name="Dos Santos S."/>
            <person name="Duthoy S."/>
            <person name="Lacroix C."/>
            <person name="Garcia-Pelayo C."/>
            <person name="Inwald J.K."/>
            <person name="Golby P."/>
            <person name="Garcia J.N."/>
            <person name="Hewinson R.G."/>
            <person name="Behr M.A."/>
            <person name="Quail M.A."/>
            <person name="Churcher C."/>
            <person name="Barrell B.G."/>
            <person name="Parkhill J."/>
            <person name="Cole S.T."/>
        </authorList>
    </citation>
    <scope>NUCLEOTIDE SEQUENCE [LARGE SCALE GENOMIC DNA]</scope>
    <source>
        <strain>BCG / Pasteur 1173P2</strain>
    </source>
</reference>
<organism>
    <name type="scientific">Mycobacterium bovis (strain BCG / Pasteur 1173P2)</name>
    <dbReference type="NCBI Taxonomy" id="410289"/>
    <lineage>
        <taxon>Bacteria</taxon>
        <taxon>Bacillati</taxon>
        <taxon>Actinomycetota</taxon>
        <taxon>Actinomycetes</taxon>
        <taxon>Mycobacteriales</taxon>
        <taxon>Mycobacteriaceae</taxon>
        <taxon>Mycobacterium</taxon>
        <taxon>Mycobacterium tuberculosis complex</taxon>
    </lineage>
</organism>
<name>RL2_MYCBP</name>
<feature type="chain" id="PRO_0000309957" description="Large ribosomal subunit protein uL2">
    <location>
        <begin position="1"/>
        <end position="280"/>
    </location>
</feature>
<feature type="region of interest" description="Disordered" evidence="2">
    <location>
        <begin position="27"/>
        <end position="59"/>
    </location>
</feature>
<feature type="region of interest" description="Disordered" evidence="2">
    <location>
        <begin position="225"/>
        <end position="280"/>
    </location>
</feature>
<feature type="compositionally biased region" description="Basic residues" evidence="2">
    <location>
        <begin position="37"/>
        <end position="59"/>
    </location>
</feature>
<feature type="compositionally biased region" description="Basic residues" evidence="2">
    <location>
        <begin position="268"/>
        <end position="280"/>
    </location>
</feature>
<evidence type="ECO:0000255" key="1">
    <source>
        <dbReference type="HAMAP-Rule" id="MF_01320"/>
    </source>
</evidence>
<evidence type="ECO:0000256" key="2">
    <source>
        <dbReference type="SAM" id="MobiDB-lite"/>
    </source>
</evidence>
<evidence type="ECO:0000305" key="3"/>
<keyword id="KW-0687">Ribonucleoprotein</keyword>
<keyword id="KW-0689">Ribosomal protein</keyword>
<keyword id="KW-0694">RNA-binding</keyword>
<keyword id="KW-0699">rRNA-binding</keyword>